<evidence type="ECO:0000250" key="1">
    <source>
        <dbReference type="UniProtKB" id="O76083"/>
    </source>
</evidence>
<evidence type="ECO:0000250" key="2">
    <source>
        <dbReference type="UniProtKB" id="Q13946"/>
    </source>
</evidence>
<evidence type="ECO:0000255" key="3">
    <source>
        <dbReference type="PROSITE-ProRule" id="PRU01192"/>
    </source>
</evidence>
<evidence type="ECO:0000305" key="4"/>
<feature type="chain" id="PRO_0000198835" description="High affinity 3',5'-cyclic-AMP phosphodiesterase 7A">
    <location>
        <begin position="1" status="less than"/>
        <end position="426"/>
    </location>
</feature>
<feature type="domain" description="PDEase" evidence="3">
    <location>
        <begin position="80"/>
        <end position="402"/>
    </location>
</feature>
<feature type="active site" description="Proton donor" evidence="1">
    <location>
        <position position="156"/>
    </location>
</feature>
<feature type="binding site" evidence="2">
    <location>
        <position position="160"/>
    </location>
    <ligand>
        <name>a divalent metal cation</name>
        <dbReference type="ChEBI" id="CHEBI:60240"/>
        <label>1</label>
    </ligand>
</feature>
<feature type="binding site" evidence="2">
    <location>
        <position position="196"/>
    </location>
    <ligand>
        <name>a divalent metal cation</name>
        <dbReference type="ChEBI" id="CHEBI:60240"/>
        <label>1</label>
    </ligand>
</feature>
<feature type="binding site" evidence="2">
    <location>
        <position position="197"/>
    </location>
    <ligand>
        <name>a divalent metal cation</name>
        <dbReference type="ChEBI" id="CHEBI:60240"/>
        <label>1</label>
    </ligand>
</feature>
<feature type="binding site" evidence="2">
    <location>
        <position position="197"/>
    </location>
    <ligand>
        <name>a divalent metal cation</name>
        <dbReference type="ChEBI" id="CHEBI:60240"/>
        <label>2</label>
    </ligand>
</feature>
<feature type="binding site" evidence="2">
    <location>
        <position position="306"/>
    </location>
    <ligand>
        <name>a divalent metal cation</name>
        <dbReference type="ChEBI" id="CHEBI:60240"/>
        <label>1</label>
    </ligand>
</feature>
<feature type="non-terminal residue">
    <location>
        <position position="1"/>
    </location>
</feature>
<gene>
    <name type="primary">Pde7a</name>
</gene>
<name>PDE7A_RAT</name>
<protein>
    <recommendedName>
        <fullName evidence="4">High affinity 3',5'-cyclic-AMP phosphodiesterase 7A</fullName>
        <ecNumber evidence="2">3.1.4.53</ecNumber>
    </recommendedName>
    <alternativeName>
        <fullName>Rolipram-insensitive phosphodiesterase type 7</fullName>
    </alternativeName>
    <alternativeName>
        <fullName evidence="4">cAMP-specific phosphodiesterase 7A</fullName>
    </alternativeName>
</protein>
<accession>O08593</accession>
<reference key="1">
    <citation type="journal article" date="1998" name="Cell Biochem. Biophys.">
        <title>Differential distribution of rat PDE-7 mRNA in embryonic and adult rat brain.</title>
        <authorList>
            <person name="Hoffmann R."/>
            <person name="Abdel'Al S."/>
            <person name="Engels P."/>
        </authorList>
    </citation>
    <scope>NUCLEOTIDE SEQUENCE [MRNA]</scope>
    <source>
        <tissue>Brain</tissue>
    </source>
</reference>
<sequence length="426" mass="49274">DQTALYIRMLGDVRVRSRAGFETERRGSHPYIDFRIFHAQSEIEASVSARNIRRLLSFQRYLRSSRFFRGATVCRSLNILDEDYNGQAKCMLEKVGNWNFDIFLFDRLTNGNSLVSLTFHLFSLHGLIEYFHLDMVKLRRFLVMIQEDYHSQNPYHNAVHAADVTQAMHCYLKEPKLANSVTPWDILLSLIAAATHDLDHPGVNQPFLIKTNHYLATLYKNTSVLENHHWRSAVGLLRESGLFSHLPLESRHEMEAQIGALILATDISRQNEYLSLFRSHLDKGDLHLDDGRHRHLVLQMALKCADICNPCRNWELSKQWSEKVTEEFFHQGDIEKKYHLGVSPLCDRQTESIANIQIGFMTYLQEPLFTEWARFSDTRLSQTMLGHVGLNKASWKGLQRQQPSSEDASAAFELNSQLLTQENRLS</sequence>
<dbReference type="EC" id="3.1.4.53" evidence="2"/>
<dbReference type="EMBL" id="U77880">
    <property type="protein sequence ID" value="AAB51234.1"/>
    <property type="molecule type" value="mRNA"/>
</dbReference>
<dbReference type="SMR" id="O08593"/>
<dbReference type="FunCoup" id="O08593">
    <property type="interactions" value="363"/>
</dbReference>
<dbReference type="STRING" id="10116.ENSRNOP00000060777"/>
<dbReference type="PaxDb" id="10116-ENSRNOP00000060777"/>
<dbReference type="UCSC" id="RGD:68391">
    <property type="organism name" value="rat"/>
</dbReference>
<dbReference type="AGR" id="RGD:68391"/>
<dbReference type="RGD" id="68391">
    <property type="gene designation" value="Pde7a"/>
</dbReference>
<dbReference type="eggNOG" id="KOG3689">
    <property type="taxonomic scope" value="Eukaryota"/>
</dbReference>
<dbReference type="InParanoid" id="O08593"/>
<dbReference type="Reactome" id="R-RNO-418555">
    <property type="pathway name" value="G alpha (s) signalling events"/>
</dbReference>
<dbReference type="UniPathway" id="UPA00762">
    <property type="reaction ID" value="UER00747"/>
</dbReference>
<dbReference type="Proteomes" id="UP000002494">
    <property type="component" value="Unplaced"/>
</dbReference>
<dbReference type="GO" id="GO:0005829">
    <property type="term" value="C:cytosol"/>
    <property type="evidence" value="ECO:0007669"/>
    <property type="project" value="UniProtKB-SubCell"/>
</dbReference>
<dbReference type="GO" id="GO:0004115">
    <property type="term" value="F:3',5'-cyclic-AMP phosphodiesterase activity"/>
    <property type="evidence" value="ECO:0000266"/>
    <property type="project" value="RGD"/>
</dbReference>
<dbReference type="GO" id="GO:0047555">
    <property type="term" value="F:3',5'-cyclic-GMP phosphodiesterase activity"/>
    <property type="evidence" value="ECO:0000318"/>
    <property type="project" value="GO_Central"/>
</dbReference>
<dbReference type="GO" id="GO:0004112">
    <property type="term" value="F:cyclic-nucleotide phosphodiesterase activity"/>
    <property type="evidence" value="ECO:0000315"/>
    <property type="project" value="RGD"/>
</dbReference>
<dbReference type="GO" id="GO:0046872">
    <property type="term" value="F:metal ion binding"/>
    <property type="evidence" value="ECO:0007669"/>
    <property type="project" value="UniProtKB-KW"/>
</dbReference>
<dbReference type="GO" id="GO:0006198">
    <property type="term" value="P:cAMP catabolic process"/>
    <property type="evidence" value="ECO:0007669"/>
    <property type="project" value="UniProtKB-UniPathway"/>
</dbReference>
<dbReference type="GO" id="GO:0019933">
    <property type="term" value="P:cAMP-mediated signaling"/>
    <property type="evidence" value="ECO:0000318"/>
    <property type="project" value="GO_Central"/>
</dbReference>
<dbReference type="CDD" id="cd00077">
    <property type="entry name" value="HDc"/>
    <property type="match status" value="1"/>
</dbReference>
<dbReference type="FunFam" id="1.10.1300.10:FF:000004">
    <property type="entry name" value="Phosphodiesterase"/>
    <property type="match status" value="1"/>
</dbReference>
<dbReference type="Gene3D" id="1.10.1300.10">
    <property type="entry name" value="3'5'-cyclic nucleotide phosphodiesterase, catalytic domain"/>
    <property type="match status" value="1"/>
</dbReference>
<dbReference type="InterPro" id="IPR003607">
    <property type="entry name" value="HD/PDEase_dom"/>
</dbReference>
<dbReference type="InterPro" id="IPR023088">
    <property type="entry name" value="PDEase"/>
</dbReference>
<dbReference type="InterPro" id="IPR002073">
    <property type="entry name" value="PDEase_catalytic_dom"/>
</dbReference>
<dbReference type="InterPro" id="IPR036971">
    <property type="entry name" value="PDEase_catalytic_dom_sf"/>
</dbReference>
<dbReference type="InterPro" id="IPR023174">
    <property type="entry name" value="PDEase_CS"/>
</dbReference>
<dbReference type="PANTHER" id="PTHR11347">
    <property type="entry name" value="CYCLIC NUCLEOTIDE PHOSPHODIESTERASE"/>
    <property type="match status" value="1"/>
</dbReference>
<dbReference type="Pfam" id="PF00233">
    <property type="entry name" value="PDEase_I"/>
    <property type="match status" value="1"/>
</dbReference>
<dbReference type="PRINTS" id="PR00387">
    <property type="entry name" value="PDIESTERASE1"/>
</dbReference>
<dbReference type="SMART" id="SM00471">
    <property type="entry name" value="HDc"/>
    <property type="match status" value="1"/>
</dbReference>
<dbReference type="SUPFAM" id="SSF109604">
    <property type="entry name" value="HD-domain/PDEase-like"/>
    <property type="match status" value="1"/>
</dbReference>
<dbReference type="PROSITE" id="PS00126">
    <property type="entry name" value="PDEASE_I_1"/>
    <property type="match status" value="1"/>
</dbReference>
<dbReference type="PROSITE" id="PS51845">
    <property type="entry name" value="PDEASE_I_2"/>
    <property type="match status" value="1"/>
</dbReference>
<keyword id="KW-0114">cAMP</keyword>
<keyword id="KW-0963">Cytoplasm</keyword>
<keyword id="KW-0378">Hydrolase</keyword>
<keyword id="KW-0479">Metal-binding</keyword>
<keyword id="KW-1185">Reference proteome</keyword>
<organism>
    <name type="scientific">Rattus norvegicus</name>
    <name type="common">Rat</name>
    <dbReference type="NCBI Taxonomy" id="10116"/>
    <lineage>
        <taxon>Eukaryota</taxon>
        <taxon>Metazoa</taxon>
        <taxon>Chordata</taxon>
        <taxon>Craniata</taxon>
        <taxon>Vertebrata</taxon>
        <taxon>Euteleostomi</taxon>
        <taxon>Mammalia</taxon>
        <taxon>Eutheria</taxon>
        <taxon>Euarchontoglires</taxon>
        <taxon>Glires</taxon>
        <taxon>Rodentia</taxon>
        <taxon>Myomorpha</taxon>
        <taxon>Muroidea</taxon>
        <taxon>Muridae</taxon>
        <taxon>Murinae</taxon>
        <taxon>Rattus</taxon>
    </lineage>
</organism>
<comment type="function">
    <text evidence="2">Hydrolyzes the second messenger cAMP, which is a key regulator of many important physiological processes. May have a role in muscle signal transduction.</text>
</comment>
<comment type="catalytic activity">
    <reaction evidence="2">
        <text>3',5'-cyclic AMP + H2O = AMP + H(+)</text>
        <dbReference type="Rhea" id="RHEA:25277"/>
        <dbReference type="ChEBI" id="CHEBI:15377"/>
        <dbReference type="ChEBI" id="CHEBI:15378"/>
        <dbReference type="ChEBI" id="CHEBI:58165"/>
        <dbReference type="ChEBI" id="CHEBI:456215"/>
        <dbReference type="EC" id="3.1.4.53"/>
    </reaction>
</comment>
<comment type="cofactor">
    <cofactor evidence="2">
        <name>a divalent metal cation</name>
        <dbReference type="ChEBI" id="CHEBI:60240"/>
    </cofactor>
    <text evidence="2">Binds 2 divalent metal cations per subunit. Site 1 may preferentially bind zinc ions, while site 2 has a preference for magnesium and/or manganese ions.</text>
</comment>
<comment type="pathway">
    <text evidence="2">Purine metabolism; 3',5'-cyclic AMP degradation; AMP from 3',5'-cyclic AMP: step 1/1.</text>
</comment>
<comment type="subunit">
    <text evidence="2">Interacts with CBFA2T3.</text>
</comment>
<comment type="subcellular location">
    <subcellularLocation>
        <location evidence="2">Cytoplasm</location>
        <location evidence="2">Cytosol</location>
    </subcellularLocation>
</comment>
<comment type="domain">
    <text evidence="4">Composed of a C-terminal catalytic domain containing two putative divalent metal sites and an N-terminal regulatory domain.</text>
</comment>
<comment type="similarity">
    <text evidence="4">Belongs to the cyclic nucleotide phosphodiesterase family. PDE7 subfamily.</text>
</comment>
<proteinExistence type="evidence at transcript level"/>